<dbReference type="EMBL" id="AE017355">
    <property type="protein sequence ID" value="AAT61009.1"/>
    <property type="molecule type" value="Genomic_DNA"/>
</dbReference>
<dbReference type="RefSeq" id="WP_000377294.1">
    <property type="nucleotide sequence ID" value="NC_005957.1"/>
</dbReference>
<dbReference type="RefSeq" id="YP_038698.1">
    <property type="nucleotide sequence ID" value="NC_005957.1"/>
</dbReference>
<dbReference type="SMR" id="Q6HCM8"/>
<dbReference type="KEGG" id="btk:BT9727_4383"/>
<dbReference type="PATRIC" id="fig|281309.8.peg.4671"/>
<dbReference type="HOGENOM" id="CLU_034079_1_0_9"/>
<dbReference type="Proteomes" id="UP000001301">
    <property type="component" value="Chromosome"/>
</dbReference>
<dbReference type="GO" id="GO:0005886">
    <property type="term" value="C:plasma membrane"/>
    <property type="evidence" value="ECO:0007669"/>
    <property type="project" value="UniProtKB-SubCell"/>
</dbReference>
<dbReference type="GO" id="GO:0005940">
    <property type="term" value="C:septin ring"/>
    <property type="evidence" value="ECO:0007669"/>
    <property type="project" value="InterPro"/>
</dbReference>
<dbReference type="GO" id="GO:0000917">
    <property type="term" value="P:division septum assembly"/>
    <property type="evidence" value="ECO:0007669"/>
    <property type="project" value="UniProtKB-KW"/>
</dbReference>
<dbReference type="GO" id="GO:0000921">
    <property type="term" value="P:septin ring assembly"/>
    <property type="evidence" value="ECO:0007669"/>
    <property type="project" value="InterPro"/>
</dbReference>
<dbReference type="HAMAP" id="MF_00728">
    <property type="entry name" value="EzrA"/>
    <property type="match status" value="1"/>
</dbReference>
<dbReference type="InterPro" id="IPR010379">
    <property type="entry name" value="EzrA"/>
</dbReference>
<dbReference type="NCBIfam" id="NF003411">
    <property type="entry name" value="PRK04778.1-5"/>
    <property type="match status" value="1"/>
</dbReference>
<dbReference type="NCBIfam" id="NF003413">
    <property type="entry name" value="PRK04778.1-7"/>
    <property type="match status" value="1"/>
</dbReference>
<dbReference type="Pfam" id="PF06160">
    <property type="entry name" value="EzrA"/>
    <property type="match status" value="1"/>
</dbReference>
<protein>
    <recommendedName>
        <fullName evidence="1">Septation ring formation regulator EzrA</fullName>
    </recommendedName>
</protein>
<sequence length="570" mass="66509">MDSILTIVIIVVSSILVLLMIELVIRNRSYKDIEALEQWKQEIKDKPVADELKRVKDLNMTGQTEELFGKWREEWDEIVSTTIPKAEKDLAQARKFASQFSFRKAKHAMNESISGLDDADNRITDILNELQQLLESHEKNSSEIEGLRDTYRSMKKSVLAHRHMYGAAEQKIEEMLDAESEKFKTFEEATNNGDYLKAREIVISLEEGLADLEIIIHQIPDLLVECQATLPVQLEDLLHGHNDMVRQGYVLEYLEIPKEVRDMKKQLQICLMDIQELHITEAAEKVENLKTSLDGFYDQLEQEVHARHYVEQKTLSVYEDLEEIRIETIETKAETQLVKQSYQLQDKDIESQKVIEKQMHILMKRFEMLQLRVAEQDIAFSIIREELEEIYEQCETLKVLHAEYKEMLQTMRKEEFEAREKLQEMRNTIFETKRFMQKSNLPGLPESIMEDLKRGQMAMQAVYEQLEVKPLNMNAVNSSLEEAYTTVNGVAEMTEELIGQAYLVEKLIQYGNRYRSHDENLAESLNYAEKLFREYQYDAALEQAASVLEQLEPGVVQKIAEYVDNEQTLS</sequence>
<gene>
    <name evidence="1" type="primary">ezrA</name>
    <name type="ordered locus">BT9727_4383</name>
</gene>
<organism>
    <name type="scientific">Bacillus thuringiensis subsp. konkukian (strain 97-27)</name>
    <dbReference type="NCBI Taxonomy" id="281309"/>
    <lineage>
        <taxon>Bacteria</taxon>
        <taxon>Bacillati</taxon>
        <taxon>Bacillota</taxon>
        <taxon>Bacilli</taxon>
        <taxon>Bacillales</taxon>
        <taxon>Bacillaceae</taxon>
        <taxon>Bacillus</taxon>
        <taxon>Bacillus cereus group</taxon>
    </lineage>
</organism>
<name>EZRA_BACHK</name>
<keyword id="KW-0131">Cell cycle</keyword>
<keyword id="KW-0132">Cell division</keyword>
<keyword id="KW-1003">Cell membrane</keyword>
<keyword id="KW-0175">Coiled coil</keyword>
<keyword id="KW-0472">Membrane</keyword>
<keyword id="KW-0717">Septation</keyword>
<keyword id="KW-0812">Transmembrane</keyword>
<keyword id="KW-1133">Transmembrane helix</keyword>
<evidence type="ECO:0000255" key="1">
    <source>
        <dbReference type="HAMAP-Rule" id="MF_00728"/>
    </source>
</evidence>
<reference key="1">
    <citation type="journal article" date="2006" name="J. Bacteriol.">
        <title>Pathogenomic sequence analysis of Bacillus cereus and Bacillus thuringiensis isolates closely related to Bacillus anthracis.</title>
        <authorList>
            <person name="Han C.S."/>
            <person name="Xie G."/>
            <person name="Challacombe J.F."/>
            <person name="Altherr M.R."/>
            <person name="Bhotika S.S."/>
            <person name="Bruce D."/>
            <person name="Campbell C.S."/>
            <person name="Campbell M.L."/>
            <person name="Chen J."/>
            <person name="Chertkov O."/>
            <person name="Cleland C."/>
            <person name="Dimitrijevic M."/>
            <person name="Doggett N.A."/>
            <person name="Fawcett J.J."/>
            <person name="Glavina T."/>
            <person name="Goodwin L.A."/>
            <person name="Hill K.K."/>
            <person name="Hitchcock P."/>
            <person name="Jackson P.J."/>
            <person name="Keim P."/>
            <person name="Kewalramani A.R."/>
            <person name="Longmire J."/>
            <person name="Lucas S."/>
            <person name="Malfatti S."/>
            <person name="McMurry K."/>
            <person name="Meincke L.J."/>
            <person name="Misra M."/>
            <person name="Moseman B.L."/>
            <person name="Mundt M."/>
            <person name="Munk A.C."/>
            <person name="Okinaka R.T."/>
            <person name="Parson-Quintana B."/>
            <person name="Reilly L.P."/>
            <person name="Richardson P."/>
            <person name="Robinson D.L."/>
            <person name="Rubin E."/>
            <person name="Saunders E."/>
            <person name="Tapia R."/>
            <person name="Tesmer J.G."/>
            <person name="Thayer N."/>
            <person name="Thompson L.S."/>
            <person name="Tice H."/>
            <person name="Ticknor L.O."/>
            <person name="Wills P.L."/>
            <person name="Brettin T.S."/>
            <person name="Gilna P."/>
        </authorList>
    </citation>
    <scope>NUCLEOTIDE SEQUENCE [LARGE SCALE GENOMIC DNA]</scope>
    <source>
        <strain>97-27</strain>
    </source>
</reference>
<feature type="chain" id="PRO_1000045894" description="Septation ring formation regulator EzrA">
    <location>
        <begin position="1"/>
        <end position="570"/>
    </location>
</feature>
<feature type="topological domain" description="Extracellular" evidence="1">
    <location>
        <begin position="1"/>
        <end position="6"/>
    </location>
</feature>
<feature type="transmembrane region" description="Helical" evidence="1">
    <location>
        <begin position="7"/>
        <end position="25"/>
    </location>
</feature>
<feature type="topological domain" description="Cytoplasmic" evidence="1">
    <location>
        <begin position="26"/>
        <end position="570"/>
    </location>
</feature>
<feature type="coiled-coil region" evidence="1">
    <location>
        <begin position="115"/>
        <end position="149"/>
    </location>
</feature>
<feature type="coiled-coil region" evidence="1">
    <location>
        <begin position="355"/>
        <end position="429"/>
    </location>
</feature>
<proteinExistence type="inferred from homology"/>
<accession>Q6HCM8</accession>
<comment type="function">
    <text evidence="1">Negative regulator of FtsZ ring formation; modulates the frequency and position of FtsZ ring formation. Inhibits FtsZ ring formation at polar sites. Interacts either with FtsZ or with one of its binding partners to promote depolymerization.</text>
</comment>
<comment type="subcellular location">
    <subcellularLocation>
        <location evidence="1">Cell membrane</location>
        <topology evidence="1">Single-pass membrane protein</topology>
    </subcellularLocation>
    <text evidence="1">Colocalized with FtsZ to the nascent septal site.</text>
</comment>
<comment type="similarity">
    <text evidence="1">Belongs to the EzrA family.</text>
</comment>